<reference key="1">
    <citation type="journal article" date="2010" name="J. Proteome Res.">
        <title>Molecular diversification of peptide toxins from the tarantula Haplopelma hainanum (Ornithoctonus hainana) venom based on transcriptomic, peptidomic, and genomic analyses.</title>
        <authorList>
            <person name="Tang X."/>
            <person name="Zhang Y."/>
            <person name="Hu W."/>
            <person name="Xu D."/>
            <person name="Tao H."/>
            <person name="Yang X."/>
            <person name="Li Y."/>
            <person name="Jiang L."/>
            <person name="Liang S."/>
        </authorList>
    </citation>
    <scope>NUCLEOTIDE SEQUENCE [LARGE SCALE MRNA]</scope>
    <source>
        <tissue>Venom gland</tissue>
    </source>
</reference>
<sequence length="90" mass="10542">MKTAIFTVVLALAVFAVLSFGWEANEKALSEEFTELIHEKEAASETEARECRYFWGECHDHMPCCDWLVCGYKWPITYNICVWNRTFPEK</sequence>
<proteinExistence type="evidence at transcript level"/>
<keyword id="KW-1015">Disulfide bond</keyword>
<keyword id="KW-0872">Ion channel impairing toxin</keyword>
<keyword id="KW-0960">Knottin</keyword>
<keyword id="KW-0964">Secreted</keyword>
<keyword id="KW-0732">Signal</keyword>
<keyword id="KW-0800">Toxin</keyword>
<evidence type="ECO:0000250" key="1"/>
<evidence type="ECO:0000255" key="2"/>
<evidence type="ECO:0000305" key="3"/>
<accession>D2Y2B0</accession>
<feature type="signal peptide" evidence="2">
    <location>
        <begin position="1"/>
        <end position="19"/>
    </location>
</feature>
<feature type="propeptide" id="PRO_0000400709" evidence="1">
    <location>
        <begin position="20"/>
        <end position="50"/>
    </location>
</feature>
<feature type="peptide" id="PRO_0000400710" description="U7-theraphotoxin-Hhn1i">
    <location>
        <begin position="51"/>
        <end position="90"/>
    </location>
</feature>
<feature type="disulfide bond" evidence="1">
    <location>
        <begin position="51"/>
        <end position="65"/>
    </location>
</feature>
<feature type="disulfide bond" evidence="1">
    <location>
        <begin position="58"/>
        <end position="70"/>
    </location>
</feature>
<feature type="disulfide bond" evidence="1">
    <location>
        <begin position="64"/>
        <end position="81"/>
    </location>
</feature>
<organism>
    <name type="scientific">Cyriopagopus hainanus</name>
    <name type="common">Chinese bird spider</name>
    <name type="synonym">Haplopelma hainanum</name>
    <dbReference type="NCBI Taxonomy" id="209901"/>
    <lineage>
        <taxon>Eukaryota</taxon>
        <taxon>Metazoa</taxon>
        <taxon>Ecdysozoa</taxon>
        <taxon>Arthropoda</taxon>
        <taxon>Chelicerata</taxon>
        <taxon>Arachnida</taxon>
        <taxon>Araneae</taxon>
        <taxon>Mygalomorphae</taxon>
        <taxon>Theraphosidae</taxon>
        <taxon>Haplopelma</taxon>
    </lineage>
</organism>
<protein>
    <recommendedName>
        <fullName>U7-theraphotoxin-Hhn1i</fullName>
        <shortName>U7-TRTX-Hhn1i</shortName>
    </recommendedName>
    <alternativeName>
        <fullName>Hainantoxin-XIII-11</fullName>
        <shortName>HNTX-XIII-11</shortName>
    </alternativeName>
</protein>
<comment type="function">
    <text evidence="1">Ion channel inhibitor.</text>
</comment>
<comment type="subcellular location">
    <subcellularLocation>
        <location evidence="1">Secreted</location>
    </subcellularLocation>
</comment>
<comment type="tissue specificity">
    <text>Expressed by the venom gland.</text>
</comment>
<comment type="domain">
    <text evidence="1">The presence of a 'disulfide through disulfide knot' structurally defines this protein as a knottin.</text>
</comment>
<comment type="similarity">
    <text evidence="3">Belongs to the neurotoxin 10 (Hwtx-1) family. 13 (Hntx-13) subfamily.</text>
</comment>
<name>H13K1_CYRHA</name>
<dbReference type="EMBL" id="GU292987">
    <property type="protein sequence ID" value="ADB56803.1"/>
    <property type="molecule type" value="mRNA"/>
</dbReference>
<dbReference type="SMR" id="D2Y2B0"/>
<dbReference type="ArachnoServer" id="AS001947">
    <property type="toxin name" value="U7-theraphotoxin-Hhn1i"/>
</dbReference>
<dbReference type="GO" id="GO:0005576">
    <property type="term" value="C:extracellular region"/>
    <property type="evidence" value="ECO:0007669"/>
    <property type="project" value="UniProtKB-SubCell"/>
</dbReference>
<dbReference type="GO" id="GO:0008200">
    <property type="term" value="F:ion channel inhibitor activity"/>
    <property type="evidence" value="ECO:0007669"/>
    <property type="project" value="InterPro"/>
</dbReference>
<dbReference type="GO" id="GO:0090729">
    <property type="term" value="F:toxin activity"/>
    <property type="evidence" value="ECO:0007669"/>
    <property type="project" value="UniProtKB-KW"/>
</dbReference>
<dbReference type="InterPro" id="IPR011696">
    <property type="entry name" value="Huwentoxin-1"/>
</dbReference>
<dbReference type="Pfam" id="PF07740">
    <property type="entry name" value="Toxin_12"/>
    <property type="match status" value="1"/>
</dbReference>
<dbReference type="SUPFAM" id="SSF57059">
    <property type="entry name" value="omega toxin-like"/>
    <property type="match status" value="1"/>
</dbReference>